<accession>Q3MV19</accession>
<accession>Q32NM4</accession>
<proteinExistence type="evidence at protein level"/>
<feature type="chain" id="PRO_0000391613" description="TNF receptor-associated factor 6-A">
    <location>
        <begin position="1"/>
        <end position="556"/>
    </location>
</feature>
<feature type="domain" description="MATH" evidence="4">
    <location>
        <begin position="384"/>
        <end position="533"/>
    </location>
</feature>
<feature type="zinc finger region" description="RING-type; degenerate" evidence="5">
    <location>
        <begin position="72"/>
        <end position="111"/>
    </location>
</feature>
<feature type="zinc finger region" description="TRAF-type 1" evidence="6">
    <location>
        <begin position="148"/>
        <end position="204"/>
    </location>
</feature>
<feature type="zinc finger region" description="TRAF-type 2" evidence="6">
    <location>
        <begin position="205"/>
        <end position="261"/>
    </location>
</feature>
<feature type="sequence conflict" description="In Ref. 2; AAI08563." evidence="8" ref="2">
    <original>V</original>
    <variation>I</variation>
    <location>
        <position position="162"/>
    </location>
</feature>
<comment type="function">
    <text evidence="3">E3 ubiquitin ligase that, together with UBE2N and UBE2V1, mediates the synthesis of 'Lys-63'-linked-polyubiquitin chains conjugated to proteins, such as IKBKG, IRAK1, AKT1 and AKT2. Also mediates ubiquitination of free/unanchored polyubiquitin chain that leads to MAP3K7 activation.</text>
</comment>
<comment type="catalytic activity">
    <reaction evidence="3">
        <text>S-ubiquitinyl-[E2 ubiquitin-conjugating enzyme]-L-cysteine + [acceptor protein]-L-lysine = [E2 ubiquitin-conjugating enzyme]-L-cysteine + N(6)-ubiquitinyl-[acceptor protein]-L-lysine.</text>
        <dbReference type="EC" id="2.3.2.27"/>
    </reaction>
</comment>
<comment type="pathway">
    <text evidence="3">Protein modification; protein ubiquitination.</text>
</comment>
<comment type="subunit">
    <text evidence="3 7">Homotrimer (By similarity). Homooligomer (By similarity). Interacts with tifa (PubMed:16023795).</text>
</comment>
<comment type="subcellular location">
    <subcellularLocation>
        <location evidence="3">Cytoplasm</location>
    </subcellularLocation>
    <subcellularLocation>
        <location evidence="3">Cytoplasm</location>
        <location evidence="3">Cell cortex</location>
    </subcellularLocation>
    <subcellularLocation>
        <location evidence="3">Nucleus</location>
    </subcellularLocation>
    <subcellularLocation>
        <location evidence="2">Lipid droplet</location>
    </subcellularLocation>
</comment>
<comment type="tissue specificity">
    <text evidence="7">Highly expressed in ovary and moderately expressed in kidney, spleen, stomach, colon and testis.</text>
</comment>
<comment type="developmental stage">
    <text evidence="7">First detected in the neurula stage and then increased during late tadpole stage.</text>
</comment>
<comment type="domain">
    <text evidence="1">The MATH/TRAF domain binds to receptor cytoplasmic domains.</text>
</comment>
<comment type="similarity">
    <text evidence="8">Belongs to the TNF receptor-associated factor family. A subfamily.</text>
</comment>
<keyword id="KW-0963">Cytoplasm</keyword>
<keyword id="KW-0551">Lipid droplet</keyword>
<keyword id="KW-0479">Metal-binding</keyword>
<keyword id="KW-0539">Nucleus</keyword>
<keyword id="KW-1185">Reference proteome</keyword>
<keyword id="KW-0677">Repeat</keyword>
<keyword id="KW-0808">Transferase</keyword>
<keyword id="KW-0833">Ubl conjugation pathway</keyword>
<keyword id="KW-0862">Zinc</keyword>
<keyword id="KW-0863">Zinc-finger</keyword>
<protein>
    <recommendedName>
        <fullName>TNF receptor-associated factor 6-A</fullName>
        <ecNumber>2.3.2.27</ecNumber>
    </recommendedName>
    <alternativeName>
        <fullName>E3 ubiquitin-protein ligase TRAF6</fullName>
    </alternativeName>
    <alternativeName>
        <fullName evidence="8">RING-type E3 ubiquitin transferase TRAF6-A</fullName>
    </alternativeName>
</protein>
<evidence type="ECO:0000250" key="1"/>
<evidence type="ECO:0000250" key="2">
    <source>
        <dbReference type="UniProtKB" id="P70196"/>
    </source>
</evidence>
<evidence type="ECO:0000250" key="3">
    <source>
        <dbReference type="UniProtKB" id="Q9Y4K3"/>
    </source>
</evidence>
<evidence type="ECO:0000255" key="4">
    <source>
        <dbReference type="PROSITE-ProRule" id="PRU00129"/>
    </source>
</evidence>
<evidence type="ECO:0000255" key="5">
    <source>
        <dbReference type="PROSITE-ProRule" id="PRU00175"/>
    </source>
</evidence>
<evidence type="ECO:0000255" key="6">
    <source>
        <dbReference type="PROSITE-ProRule" id="PRU00207"/>
    </source>
</evidence>
<evidence type="ECO:0000269" key="7">
    <source>
    </source>
</evidence>
<evidence type="ECO:0000305" key="8"/>
<organism>
    <name type="scientific">Xenopus laevis</name>
    <name type="common">African clawed frog</name>
    <dbReference type="NCBI Taxonomy" id="8355"/>
    <lineage>
        <taxon>Eukaryota</taxon>
        <taxon>Metazoa</taxon>
        <taxon>Chordata</taxon>
        <taxon>Craniata</taxon>
        <taxon>Vertebrata</taxon>
        <taxon>Euteleostomi</taxon>
        <taxon>Amphibia</taxon>
        <taxon>Batrachia</taxon>
        <taxon>Anura</taxon>
        <taxon>Pipoidea</taxon>
        <taxon>Pipidae</taxon>
        <taxon>Xenopodinae</taxon>
        <taxon>Xenopus</taxon>
        <taxon>Xenopus</taxon>
    </lineage>
</organism>
<dbReference type="EC" id="2.3.2.27"/>
<dbReference type="EMBL" id="AB100960">
    <property type="protein sequence ID" value="BAE44508.1"/>
    <property type="molecule type" value="mRNA"/>
</dbReference>
<dbReference type="EMBL" id="BC108562">
    <property type="protein sequence ID" value="AAI08563.1"/>
    <property type="molecule type" value="mRNA"/>
</dbReference>
<dbReference type="RefSeq" id="NP_001089863.1">
    <property type="nucleotide sequence ID" value="NM_001096394.1"/>
</dbReference>
<dbReference type="SMR" id="Q3MV19"/>
<dbReference type="DNASU" id="734929"/>
<dbReference type="GeneID" id="734929"/>
<dbReference type="KEGG" id="xla:734929"/>
<dbReference type="AGR" id="Xenbase:XB-GENE-6254727"/>
<dbReference type="CTD" id="734929"/>
<dbReference type="Xenbase" id="XB-GENE-6254727">
    <property type="gene designation" value="traf6.S"/>
</dbReference>
<dbReference type="OMA" id="SCPYRRQ"/>
<dbReference type="OrthoDB" id="6475149at2759"/>
<dbReference type="UniPathway" id="UPA00143"/>
<dbReference type="Proteomes" id="UP000186698">
    <property type="component" value="Chromosome 4S"/>
</dbReference>
<dbReference type="Bgee" id="734929">
    <property type="expression patterns" value="Expressed in oocyte and 19 other cell types or tissues"/>
</dbReference>
<dbReference type="GO" id="GO:0005938">
    <property type="term" value="C:cell cortex"/>
    <property type="evidence" value="ECO:0007669"/>
    <property type="project" value="UniProtKB-SubCell"/>
</dbReference>
<dbReference type="GO" id="GO:0005737">
    <property type="term" value="C:cytoplasm"/>
    <property type="evidence" value="ECO:0000318"/>
    <property type="project" value="GO_Central"/>
</dbReference>
<dbReference type="GO" id="GO:0009898">
    <property type="term" value="C:cytoplasmic side of plasma membrane"/>
    <property type="evidence" value="ECO:0000318"/>
    <property type="project" value="GO_Central"/>
</dbReference>
<dbReference type="GO" id="GO:0098978">
    <property type="term" value="C:glutamatergic synapse"/>
    <property type="evidence" value="ECO:0000318"/>
    <property type="project" value="GO_Central"/>
</dbReference>
<dbReference type="GO" id="GO:0005811">
    <property type="term" value="C:lipid droplet"/>
    <property type="evidence" value="ECO:0007669"/>
    <property type="project" value="UniProtKB-SubCell"/>
</dbReference>
<dbReference type="GO" id="GO:0005634">
    <property type="term" value="C:nucleus"/>
    <property type="evidence" value="ECO:0007669"/>
    <property type="project" value="UniProtKB-SubCell"/>
</dbReference>
<dbReference type="GO" id="GO:0035591">
    <property type="term" value="F:signaling adaptor activity"/>
    <property type="evidence" value="ECO:0000318"/>
    <property type="project" value="GO_Central"/>
</dbReference>
<dbReference type="GO" id="GO:0005164">
    <property type="term" value="F:tumor necrosis factor receptor binding"/>
    <property type="evidence" value="ECO:0007669"/>
    <property type="project" value="InterPro"/>
</dbReference>
<dbReference type="GO" id="GO:0061630">
    <property type="term" value="F:ubiquitin protein ligase activity"/>
    <property type="evidence" value="ECO:0000318"/>
    <property type="project" value="GO_Central"/>
</dbReference>
<dbReference type="GO" id="GO:0004842">
    <property type="term" value="F:ubiquitin-protein transferase activity"/>
    <property type="evidence" value="ECO:0000250"/>
    <property type="project" value="UniProtKB"/>
</dbReference>
<dbReference type="GO" id="GO:0008270">
    <property type="term" value="F:zinc ion binding"/>
    <property type="evidence" value="ECO:0007669"/>
    <property type="project" value="UniProtKB-KW"/>
</dbReference>
<dbReference type="GO" id="GO:0007250">
    <property type="term" value="P:activation of NF-kappaB-inducing kinase activity"/>
    <property type="evidence" value="ECO:0000314"/>
    <property type="project" value="UniProtKB"/>
</dbReference>
<dbReference type="GO" id="GO:0045087">
    <property type="term" value="P:innate immune response"/>
    <property type="evidence" value="ECO:0000318"/>
    <property type="project" value="GO_Central"/>
</dbReference>
<dbReference type="GO" id="GO:0031663">
    <property type="term" value="P:lipopolysaccharide-mediated signaling pathway"/>
    <property type="evidence" value="ECO:0000318"/>
    <property type="project" value="GO_Central"/>
</dbReference>
<dbReference type="GO" id="GO:0070534">
    <property type="term" value="P:protein K63-linked ubiquitination"/>
    <property type="evidence" value="ECO:0000250"/>
    <property type="project" value="UniProtKB"/>
</dbReference>
<dbReference type="GO" id="GO:0042981">
    <property type="term" value="P:regulation of apoptotic process"/>
    <property type="evidence" value="ECO:0007669"/>
    <property type="project" value="InterPro"/>
</dbReference>
<dbReference type="GO" id="GO:0043122">
    <property type="term" value="P:regulation of canonical NF-kappaB signal transduction"/>
    <property type="evidence" value="ECO:0000318"/>
    <property type="project" value="GO_Central"/>
</dbReference>
<dbReference type="CDD" id="cd03776">
    <property type="entry name" value="MATH_TRAF6"/>
    <property type="match status" value="1"/>
</dbReference>
<dbReference type="CDD" id="cd16643">
    <property type="entry name" value="mRING-HC-C3HC3D_TRAF6"/>
    <property type="match status" value="1"/>
</dbReference>
<dbReference type="FunFam" id="2.60.210.10:FF:000010">
    <property type="entry name" value="TNF receptor-associated factor"/>
    <property type="match status" value="1"/>
</dbReference>
<dbReference type="FunFam" id="3.30.40.10:FF:000179">
    <property type="entry name" value="TNF receptor-associated factor"/>
    <property type="match status" value="1"/>
</dbReference>
<dbReference type="FunFam" id="3.30.40.10:FF:000211">
    <property type="entry name" value="TNF receptor-associated factor"/>
    <property type="match status" value="1"/>
</dbReference>
<dbReference type="Gene3D" id="2.60.210.10">
    <property type="entry name" value="Apoptosis, Tumor Necrosis Factor Receptor Associated Protein 2, Chain A"/>
    <property type="match status" value="1"/>
</dbReference>
<dbReference type="Gene3D" id="3.30.40.10">
    <property type="entry name" value="Zinc/RING finger domain, C3HC4 (zinc finger)"/>
    <property type="match status" value="3"/>
</dbReference>
<dbReference type="InterPro" id="IPR002083">
    <property type="entry name" value="MATH/TRAF_dom"/>
</dbReference>
<dbReference type="InterPro" id="IPR012227">
    <property type="entry name" value="TNF_rcpt-assoc_TRAF_met"/>
</dbReference>
<dbReference type="InterPro" id="IPR008974">
    <property type="entry name" value="TRAF-like"/>
</dbReference>
<dbReference type="InterPro" id="IPR049342">
    <property type="entry name" value="TRAF1-6_MATH_dom"/>
</dbReference>
<dbReference type="InterPro" id="IPR037309">
    <property type="entry name" value="TRAF6_MATH"/>
</dbReference>
<dbReference type="InterPro" id="IPR027139">
    <property type="entry name" value="TRAF6_RING-HC"/>
</dbReference>
<dbReference type="InterPro" id="IPR041310">
    <property type="entry name" value="TRAF6_Z2"/>
</dbReference>
<dbReference type="InterPro" id="IPR001841">
    <property type="entry name" value="Znf_RING"/>
</dbReference>
<dbReference type="InterPro" id="IPR013083">
    <property type="entry name" value="Znf_RING/FYVE/PHD"/>
</dbReference>
<dbReference type="InterPro" id="IPR017907">
    <property type="entry name" value="Znf_RING_CS"/>
</dbReference>
<dbReference type="InterPro" id="IPR001293">
    <property type="entry name" value="Znf_TRAF"/>
</dbReference>
<dbReference type="PANTHER" id="PTHR10131">
    <property type="entry name" value="TNF RECEPTOR ASSOCIATED FACTOR"/>
    <property type="match status" value="1"/>
</dbReference>
<dbReference type="PANTHER" id="PTHR10131:SF152">
    <property type="entry name" value="TNF RECEPTOR-ASSOCIATED FACTOR 6"/>
    <property type="match status" value="1"/>
</dbReference>
<dbReference type="Pfam" id="PF21355">
    <property type="entry name" value="TRAF-mep_MATH"/>
    <property type="match status" value="1"/>
</dbReference>
<dbReference type="Pfam" id="PF18048">
    <property type="entry name" value="TRAF6_Z2"/>
    <property type="match status" value="1"/>
</dbReference>
<dbReference type="Pfam" id="PF13923">
    <property type="entry name" value="zf-C3HC4_2"/>
    <property type="match status" value="1"/>
</dbReference>
<dbReference type="Pfam" id="PF02176">
    <property type="entry name" value="zf-TRAF"/>
    <property type="match status" value="1"/>
</dbReference>
<dbReference type="PIRSF" id="PIRSF015614">
    <property type="entry name" value="TRAF"/>
    <property type="match status" value="1"/>
</dbReference>
<dbReference type="SMART" id="SM00061">
    <property type="entry name" value="MATH"/>
    <property type="match status" value="1"/>
</dbReference>
<dbReference type="SMART" id="SM00184">
    <property type="entry name" value="RING"/>
    <property type="match status" value="2"/>
</dbReference>
<dbReference type="SUPFAM" id="SSF57850">
    <property type="entry name" value="RING/U-box"/>
    <property type="match status" value="1"/>
</dbReference>
<dbReference type="SUPFAM" id="SSF49599">
    <property type="entry name" value="TRAF domain-like"/>
    <property type="match status" value="3"/>
</dbReference>
<dbReference type="PROSITE" id="PS50144">
    <property type="entry name" value="MATH"/>
    <property type="match status" value="1"/>
</dbReference>
<dbReference type="PROSITE" id="PS00518">
    <property type="entry name" value="ZF_RING_1"/>
    <property type="match status" value="1"/>
</dbReference>
<dbReference type="PROSITE" id="PS50089">
    <property type="entry name" value="ZF_RING_2"/>
    <property type="match status" value="1"/>
</dbReference>
<dbReference type="PROSITE" id="PS50145">
    <property type="entry name" value="ZF_TRAF"/>
    <property type="match status" value="2"/>
</dbReference>
<sequence>MSILNPRTSLEAGDSEDACCAAMASVCCINTKEDADSPSAGLPSGTTQNLDVEEIQGYDVEFDPPLESKYECPICLMALREAVQTPCGHRFCKACILKSLRNAGHKCPVDNEILMEKQLFPDNFAKREILSLRVKCPNLGCTDTMELRHLEHHLVQCQFASVECSQCQGSFLKLLLDKHMEHECGRRRTFCDNCGLAMAYEDKSGHELICPMAYVTCDYCQTNLIREQMPAHYSMDCTMAPIPCMYCEFGCREKMQRHNLAGHLQDFTQAHMRMMAQTLRSFSTTPTSHISDISFCDPNQFEPVPLSVAPAHPSHMPSQQDCSQETRNLRETVEQLEGRLVRQDHQIRELIAKMETQCTYVNELKHTIHSLEDKVADMDAHRCNGVFIWRIKGFSGLQKSQEEEKPVVIHSPGFYTGDPGYKLCLRLHLQLPSAQRCANYISLFVHTMQGDYDSLLPWPLQGTIRLSILDQSESTARQDQVEVMDTKPDLLAFQRPTAPRNPKGFGYVTFMHLNTLKQRQYVKNDTLLVRCSVNIHLDLTSPRREGFQPRSGEGTL</sequence>
<reference key="1">
    <citation type="journal article" date="2005" name="Gene">
        <title>Identification and characterization of Xenopus laevis homologs of mammalian TRAF6 and its binding protein TIFA.</title>
        <authorList>
            <person name="Inoue J."/>
            <person name="Yagi S."/>
            <person name="Ishikawa K."/>
            <person name="Azuma S."/>
            <person name="Ikawa S."/>
            <person name="Semba K."/>
        </authorList>
    </citation>
    <scope>NUCLEOTIDE SEQUENCE [MRNA]</scope>
    <scope>INTERACTION WITH TIFA</scope>
    <scope>DEVELOPMENTAL STAGE</scope>
    <scope>TISSUE SPECIFICITY</scope>
</reference>
<reference key="2">
    <citation type="submission" date="2005-11" db="EMBL/GenBank/DDBJ databases">
        <authorList>
            <consortium name="NIH - Xenopus Gene Collection (XGC) project"/>
        </authorList>
    </citation>
    <scope>NUCLEOTIDE SEQUENCE [LARGE SCALE MRNA]</scope>
    <source>
        <tissue>Embryo</tissue>
    </source>
</reference>
<name>TRF6A_XENLA</name>
<gene>
    <name type="primary">traf6-a</name>
</gene>